<feature type="chain" id="PRO_1000079474" description="Small ribosomal subunit protein bS6">
    <location>
        <begin position="1"/>
        <end position="97"/>
    </location>
</feature>
<protein>
    <recommendedName>
        <fullName evidence="1">Small ribosomal subunit protein bS6</fullName>
    </recommendedName>
    <alternativeName>
        <fullName evidence="2">30S ribosomal protein S6</fullName>
    </alternativeName>
</protein>
<sequence>MRTYEMMFVLRPDLEEEQVLETKERLQKIIADFGGEFINAADGWGKKRLAYAIDDYVEGIYSLWYFKGKPETVDELDRIIKISENFLRHIIIRQDEK</sequence>
<comment type="function">
    <text evidence="1">Binds together with bS18 to 16S ribosomal RNA.</text>
</comment>
<comment type="similarity">
    <text evidence="1">Belongs to the bacterial ribosomal protein bS6 family.</text>
</comment>
<accession>Q0ATX6</accession>
<gene>
    <name evidence="1" type="primary">rpsF</name>
    <name type="ordered locus">Swol_2540</name>
</gene>
<evidence type="ECO:0000255" key="1">
    <source>
        <dbReference type="HAMAP-Rule" id="MF_00360"/>
    </source>
</evidence>
<evidence type="ECO:0000305" key="2"/>
<reference key="1">
    <citation type="journal article" date="2010" name="Environ. Microbiol.">
        <title>The genome of Syntrophomonas wolfei: new insights into syntrophic metabolism and biohydrogen production.</title>
        <authorList>
            <person name="Sieber J.R."/>
            <person name="Sims D.R."/>
            <person name="Han C."/>
            <person name="Kim E."/>
            <person name="Lykidis A."/>
            <person name="Lapidus A.L."/>
            <person name="McDonnald E."/>
            <person name="Rohlin L."/>
            <person name="Culley D.E."/>
            <person name="Gunsalus R."/>
            <person name="McInerney M.J."/>
        </authorList>
    </citation>
    <scope>NUCLEOTIDE SEQUENCE [LARGE SCALE GENOMIC DNA]</scope>
    <source>
        <strain>DSM 2245B / Goettingen</strain>
    </source>
</reference>
<name>RS6_SYNWW</name>
<keyword id="KW-1185">Reference proteome</keyword>
<keyword id="KW-0687">Ribonucleoprotein</keyword>
<keyword id="KW-0689">Ribosomal protein</keyword>
<keyword id="KW-0694">RNA-binding</keyword>
<keyword id="KW-0699">rRNA-binding</keyword>
<organism>
    <name type="scientific">Syntrophomonas wolfei subsp. wolfei (strain DSM 2245B / Goettingen)</name>
    <dbReference type="NCBI Taxonomy" id="335541"/>
    <lineage>
        <taxon>Bacteria</taxon>
        <taxon>Bacillati</taxon>
        <taxon>Bacillota</taxon>
        <taxon>Clostridia</taxon>
        <taxon>Eubacteriales</taxon>
        <taxon>Syntrophomonadaceae</taxon>
        <taxon>Syntrophomonas</taxon>
    </lineage>
</organism>
<proteinExistence type="inferred from homology"/>
<dbReference type="EMBL" id="CP000448">
    <property type="protein sequence ID" value="ABI69828.1"/>
    <property type="molecule type" value="Genomic_DNA"/>
</dbReference>
<dbReference type="RefSeq" id="WP_011641908.1">
    <property type="nucleotide sequence ID" value="NC_008346.1"/>
</dbReference>
<dbReference type="SMR" id="Q0ATX6"/>
<dbReference type="STRING" id="335541.Swol_2540"/>
<dbReference type="KEGG" id="swo:Swol_2540"/>
<dbReference type="eggNOG" id="COG0360">
    <property type="taxonomic scope" value="Bacteria"/>
</dbReference>
<dbReference type="HOGENOM" id="CLU_113441_5_1_9"/>
<dbReference type="OrthoDB" id="9812702at2"/>
<dbReference type="Proteomes" id="UP000001968">
    <property type="component" value="Chromosome"/>
</dbReference>
<dbReference type="GO" id="GO:0005737">
    <property type="term" value="C:cytoplasm"/>
    <property type="evidence" value="ECO:0007669"/>
    <property type="project" value="UniProtKB-ARBA"/>
</dbReference>
<dbReference type="GO" id="GO:1990904">
    <property type="term" value="C:ribonucleoprotein complex"/>
    <property type="evidence" value="ECO:0007669"/>
    <property type="project" value="UniProtKB-KW"/>
</dbReference>
<dbReference type="GO" id="GO:0005840">
    <property type="term" value="C:ribosome"/>
    <property type="evidence" value="ECO:0007669"/>
    <property type="project" value="UniProtKB-KW"/>
</dbReference>
<dbReference type="GO" id="GO:0070181">
    <property type="term" value="F:small ribosomal subunit rRNA binding"/>
    <property type="evidence" value="ECO:0007669"/>
    <property type="project" value="TreeGrafter"/>
</dbReference>
<dbReference type="GO" id="GO:0003735">
    <property type="term" value="F:structural constituent of ribosome"/>
    <property type="evidence" value="ECO:0007669"/>
    <property type="project" value="InterPro"/>
</dbReference>
<dbReference type="GO" id="GO:0006412">
    <property type="term" value="P:translation"/>
    <property type="evidence" value="ECO:0007669"/>
    <property type="project" value="UniProtKB-UniRule"/>
</dbReference>
<dbReference type="CDD" id="cd00473">
    <property type="entry name" value="bS6"/>
    <property type="match status" value="1"/>
</dbReference>
<dbReference type="Gene3D" id="3.30.70.60">
    <property type="match status" value="1"/>
</dbReference>
<dbReference type="HAMAP" id="MF_00360">
    <property type="entry name" value="Ribosomal_bS6"/>
    <property type="match status" value="1"/>
</dbReference>
<dbReference type="InterPro" id="IPR000529">
    <property type="entry name" value="Ribosomal_bS6"/>
</dbReference>
<dbReference type="InterPro" id="IPR035980">
    <property type="entry name" value="Ribosomal_bS6_sf"/>
</dbReference>
<dbReference type="InterPro" id="IPR020814">
    <property type="entry name" value="Ribosomal_S6_plastid/chlpt"/>
</dbReference>
<dbReference type="InterPro" id="IPR014717">
    <property type="entry name" value="Transl_elong_EF1B/ribsomal_bS6"/>
</dbReference>
<dbReference type="NCBIfam" id="TIGR00166">
    <property type="entry name" value="S6"/>
    <property type="match status" value="1"/>
</dbReference>
<dbReference type="PANTHER" id="PTHR21011">
    <property type="entry name" value="MITOCHONDRIAL 28S RIBOSOMAL PROTEIN S6"/>
    <property type="match status" value="1"/>
</dbReference>
<dbReference type="PANTHER" id="PTHR21011:SF1">
    <property type="entry name" value="SMALL RIBOSOMAL SUBUNIT PROTEIN BS6M"/>
    <property type="match status" value="1"/>
</dbReference>
<dbReference type="Pfam" id="PF01250">
    <property type="entry name" value="Ribosomal_S6"/>
    <property type="match status" value="1"/>
</dbReference>
<dbReference type="SUPFAM" id="SSF54995">
    <property type="entry name" value="Ribosomal protein S6"/>
    <property type="match status" value="1"/>
</dbReference>